<dbReference type="EMBL" id="AY362735">
    <property type="protein sequence ID" value="AAR13344.1"/>
    <property type="molecule type" value="Genomic_DNA"/>
</dbReference>
<dbReference type="RefSeq" id="NP_001160162.1">
    <property type="nucleotide sequence ID" value="NM_001166690.1"/>
</dbReference>
<dbReference type="SMR" id="Q67ET5"/>
<dbReference type="FunCoup" id="Q67ET5">
    <property type="interactions" value="87"/>
</dbReference>
<dbReference type="STRING" id="10116.ENSRNOP00000050711"/>
<dbReference type="GlyCosmos" id="Q67ET5">
    <property type="glycosylation" value="1 site, No reported glycans"/>
</dbReference>
<dbReference type="GlyGen" id="Q67ET5">
    <property type="glycosylation" value="1 site"/>
</dbReference>
<dbReference type="PhosphoSitePlus" id="Q67ET5"/>
<dbReference type="PaxDb" id="10116-ENSRNOP00000050711"/>
<dbReference type="GeneID" id="100310886"/>
<dbReference type="KEGG" id="rno:100310886"/>
<dbReference type="UCSC" id="RGD:2314265">
    <property type="organism name" value="rat"/>
</dbReference>
<dbReference type="AGR" id="RGD:2314265"/>
<dbReference type="CTD" id="667992"/>
<dbReference type="RGD" id="2314265">
    <property type="gene designation" value="Tas2r103"/>
</dbReference>
<dbReference type="eggNOG" id="ENOG502SKRK">
    <property type="taxonomic scope" value="Eukaryota"/>
</dbReference>
<dbReference type="InParanoid" id="Q67ET5"/>
<dbReference type="PhylomeDB" id="Q67ET5"/>
<dbReference type="PRO" id="PR:Q67ET5"/>
<dbReference type="Proteomes" id="UP000002494">
    <property type="component" value="Unplaced"/>
</dbReference>
<dbReference type="GO" id="GO:0016020">
    <property type="term" value="C:membrane"/>
    <property type="evidence" value="ECO:0000318"/>
    <property type="project" value="GO_Central"/>
</dbReference>
<dbReference type="GO" id="GO:0033038">
    <property type="term" value="F:bitter taste receptor activity"/>
    <property type="evidence" value="ECO:0000318"/>
    <property type="project" value="GO_Central"/>
</dbReference>
<dbReference type="GO" id="GO:0004930">
    <property type="term" value="F:G protein-coupled receptor activity"/>
    <property type="evidence" value="ECO:0007669"/>
    <property type="project" value="UniProtKB-KW"/>
</dbReference>
<dbReference type="GO" id="GO:0001580">
    <property type="term" value="P:detection of chemical stimulus involved in sensory perception of bitter taste"/>
    <property type="evidence" value="ECO:0000318"/>
    <property type="project" value="GO_Central"/>
</dbReference>
<dbReference type="CDD" id="cd15019">
    <property type="entry name" value="7tm_TAS2R14-like"/>
    <property type="match status" value="1"/>
</dbReference>
<dbReference type="FunFam" id="1.20.1070.10:FF:000042">
    <property type="entry name" value="Taste receptor type 2 member 7"/>
    <property type="match status" value="1"/>
</dbReference>
<dbReference type="Gene3D" id="1.20.1070.10">
    <property type="entry name" value="Rhodopsin 7-helix transmembrane proteins"/>
    <property type="match status" value="1"/>
</dbReference>
<dbReference type="InterPro" id="IPR007960">
    <property type="entry name" value="TAS2R"/>
</dbReference>
<dbReference type="PANTHER" id="PTHR11394">
    <property type="entry name" value="TASTE RECEPTOR TYPE 2"/>
    <property type="match status" value="1"/>
</dbReference>
<dbReference type="PANTHER" id="PTHR11394:SF75">
    <property type="entry name" value="TASTE RECEPTOR TYPE 2 MEMBER 103"/>
    <property type="match status" value="1"/>
</dbReference>
<dbReference type="Pfam" id="PF05296">
    <property type="entry name" value="TAS2R"/>
    <property type="match status" value="1"/>
</dbReference>
<dbReference type="SUPFAM" id="SSF81321">
    <property type="entry name" value="Family A G protein-coupled receptor-like"/>
    <property type="match status" value="1"/>
</dbReference>
<reference evidence="4" key="1">
    <citation type="submission" date="2003-08" db="EMBL/GenBank/DDBJ databases">
        <title>Identification of new putative rat taste receptors belonging to the T2R family.</title>
        <authorList>
            <person name="Conte C."/>
            <person name="Ebeling M."/>
            <person name="Marcuz A."/>
            <person name="Andres-Barquin P.J."/>
        </authorList>
    </citation>
    <scope>NUCLEOTIDE SEQUENCE [GENOMIC DNA]</scope>
    <source>
        <strain evidence="4">Sprague-Dawley</strain>
    </source>
</reference>
<protein>
    <recommendedName>
        <fullName>Taste receptor type 2 member 103</fullName>
        <shortName>T2R103</shortName>
    </recommendedName>
    <alternativeName>
        <fullName>Taste receptor type 2 member 15</fullName>
        <shortName>T2R15</shortName>
    </alternativeName>
</protein>
<gene>
    <name evidence="1" type="primary">Tas2r103</name>
    <name type="synonym">Tas2r15</name>
</gene>
<keyword id="KW-0297">G-protein coupled receptor</keyword>
<keyword id="KW-0325">Glycoprotein</keyword>
<keyword id="KW-0472">Membrane</keyword>
<keyword id="KW-0675">Receptor</keyword>
<keyword id="KW-1185">Reference proteome</keyword>
<keyword id="KW-0716">Sensory transduction</keyword>
<keyword id="KW-0919">Taste</keyword>
<keyword id="KW-0807">Transducer</keyword>
<keyword id="KW-0812">Transmembrane</keyword>
<keyword id="KW-1133">Transmembrane helix</keyword>
<name>TR103_RAT</name>
<comment type="function">
    <text evidence="1">Gustducin-coupled receptor implicated in the perception of bitter compounds in the oral cavity and the gastrointestinal tract. Signals through PLCB2 and the calcium-regulated cation channel TRPM5 (By similarity).</text>
</comment>
<comment type="subcellular location">
    <subcellularLocation>
        <location evidence="3">Membrane</location>
        <topology evidence="3">Multi-pass membrane protein</topology>
    </subcellularLocation>
</comment>
<comment type="miscellaneous">
    <text evidence="3">Several bitter taste receptors with distinct ligand specificities are expressed in a single taste receptor cell.</text>
</comment>
<comment type="similarity">
    <text evidence="2">Belongs to the G-protein coupled receptor T2R family.</text>
</comment>
<organism>
    <name type="scientific">Rattus norvegicus</name>
    <name type="common">Rat</name>
    <dbReference type="NCBI Taxonomy" id="10116"/>
    <lineage>
        <taxon>Eukaryota</taxon>
        <taxon>Metazoa</taxon>
        <taxon>Chordata</taxon>
        <taxon>Craniata</taxon>
        <taxon>Vertebrata</taxon>
        <taxon>Euteleostomi</taxon>
        <taxon>Mammalia</taxon>
        <taxon>Eutheria</taxon>
        <taxon>Euarchontoglires</taxon>
        <taxon>Glires</taxon>
        <taxon>Rodentia</taxon>
        <taxon>Myomorpha</taxon>
        <taxon>Muroidea</taxon>
        <taxon>Muridae</taxon>
        <taxon>Murinae</taxon>
        <taxon>Rattus</taxon>
    </lineage>
</organism>
<sequence length="312" mass="34961">MVVTMRAALRLMLISTVSLELIIGILANVFIALVNIIDWIKRGKISAVDKIYMGLAISRTAFVLSVITGFLIAFLDPASLGIGIMIRLLTMSWTVTNHFSVWFATCLSIFYFLKITNFSNTVFLALKWKVKKVVSVTLVVSLIILFINVIVIHIYTDRFQVNMVQKCGANNTLRAYGLFLSISTVFTFIPFTASLTMFLLLIFSLWRHLKTMHHNATGSRDVSTVAHIKGLQTVVAFLLLYTVFAMSLFSQSLSIDAQHTNLLSHFLRCIGVAFPSGHSCALILGNNKLRQASLSVIFWLRCKYKHTENQGP</sequence>
<feature type="chain" id="PRO_0000247659" description="Taste receptor type 2 member 103">
    <location>
        <begin position="1"/>
        <end position="312"/>
    </location>
</feature>
<feature type="topological domain" description="Extracellular" evidence="2">
    <location>
        <begin position="1"/>
        <end position="16"/>
    </location>
</feature>
<feature type="transmembrane region" description="Helical; Name=1" evidence="2">
    <location>
        <begin position="17"/>
        <end position="37"/>
    </location>
</feature>
<feature type="topological domain" description="Cytoplasmic" evidence="2">
    <location>
        <begin position="38"/>
        <end position="65"/>
    </location>
</feature>
<feature type="transmembrane region" description="Helical; Name=2" evidence="2">
    <location>
        <begin position="66"/>
        <end position="86"/>
    </location>
</feature>
<feature type="topological domain" description="Extracellular" evidence="2">
    <location>
        <begin position="87"/>
        <end position="92"/>
    </location>
</feature>
<feature type="transmembrane region" description="Helical; Name=3" evidence="2">
    <location>
        <begin position="93"/>
        <end position="113"/>
    </location>
</feature>
<feature type="topological domain" description="Cytoplasmic" evidence="2">
    <location>
        <begin position="114"/>
        <end position="133"/>
    </location>
</feature>
<feature type="transmembrane region" description="Helical; Name=4" evidence="2">
    <location>
        <begin position="134"/>
        <end position="154"/>
    </location>
</feature>
<feature type="topological domain" description="Extracellular" evidence="2">
    <location>
        <begin position="155"/>
        <end position="184"/>
    </location>
</feature>
<feature type="transmembrane region" description="Helical; Name=5" evidence="2">
    <location>
        <begin position="185"/>
        <end position="205"/>
    </location>
</feature>
<feature type="topological domain" description="Cytoplasmic" evidence="2">
    <location>
        <begin position="206"/>
        <end position="229"/>
    </location>
</feature>
<feature type="transmembrane region" description="Helical; Name=6" evidence="2">
    <location>
        <begin position="230"/>
        <end position="250"/>
    </location>
</feature>
<feature type="topological domain" description="Extracellular" evidence="2">
    <location>
        <begin position="251"/>
        <end position="264"/>
    </location>
</feature>
<feature type="transmembrane region" description="Helical; Name=7" evidence="2">
    <location>
        <begin position="265"/>
        <end position="285"/>
    </location>
</feature>
<feature type="topological domain" description="Cytoplasmic" evidence="2">
    <location>
        <begin position="286"/>
        <end position="312"/>
    </location>
</feature>
<feature type="glycosylation site" description="N-linked (GlcNAc...) asparagine" evidence="2">
    <location>
        <position position="170"/>
    </location>
</feature>
<proteinExistence type="inferred from homology"/>
<accession>Q67ET5</accession>
<evidence type="ECO:0000250" key="1">
    <source>
        <dbReference type="UniProtKB" id="Q9JKA3"/>
    </source>
</evidence>
<evidence type="ECO:0000255" key="2"/>
<evidence type="ECO:0000305" key="3"/>
<evidence type="ECO:0000312" key="4">
    <source>
        <dbReference type="EMBL" id="AAR13344.1"/>
    </source>
</evidence>